<feature type="chain" id="PRO_0000100926" description="Phosphoribosylaminoimidazole-succinocarboxamide synthase">
    <location>
        <begin position="1"/>
        <end position="301"/>
    </location>
</feature>
<accession>P50124</accession>
<organism>
    <name type="scientific">Cyberlindnera jadinii</name>
    <name type="common">Torula yeast</name>
    <name type="synonym">Pichia jadinii</name>
    <dbReference type="NCBI Taxonomy" id="4903"/>
    <lineage>
        <taxon>Eukaryota</taxon>
        <taxon>Fungi</taxon>
        <taxon>Dikarya</taxon>
        <taxon>Ascomycota</taxon>
        <taxon>Saccharomycotina</taxon>
        <taxon>Saccharomycetes</taxon>
        <taxon>Phaffomycetales</taxon>
        <taxon>Phaffomycetaceae</taxon>
        <taxon>Cyberlindnera</taxon>
    </lineage>
</organism>
<reference key="1">
    <citation type="journal article" date="1994" name="Biosci. Biotechnol. Biochem.">
        <title>Primary structure of the ADE1 gene from Candida utilis.</title>
        <authorList>
            <person name="Nishiya Y."/>
        </authorList>
    </citation>
    <scope>NUCLEOTIDE SEQUENCE [GENOMIC DNA]</scope>
    <source>
        <strain>CA(U)-37</strain>
    </source>
</reference>
<evidence type="ECO:0000305" key="1"/>
<name>PUR7_CYBJA</name>
<gene>
    <name type="primary">ADE1</name>
</gene>
<dbReference type="EC" id="6.3.2.6"/>
<dbReference type="EMBL" id="D17356">
    <property type="protein sequence ID" value="BAA04175.1"/>
    <property type="molecule type" value="Genomic_DNA"/>
</dbReference>
<dbReference type="PIR" id="JC2039">
    <property type="entry name" value="JC2039"/>
</dbReference>
<dbReference type="SMR" id="P50124"/>
<dbReference type="UniPathway" id="UPA00074">
    <property type="reaction ID" value="UER00131"/>
</dbReference>
<dbReference type="GO" id="GO:0005737">
    <property type="term" value="C:cytoplasm"/>
    <property type="evidence" value="ECO:0007669"/>
    <property type="project" value="TreeGrafter"/>
</dbReference>
<dbReference type="GO" id="GO:0005524">
    <property type="term" value="F:ATP binding"/>
    <property type="evidence" value="ECO:0007669"/>
    <property type="project" value="UniProtKB-KW"/>
</dbReference>
<dbReference type="GO" id="GO:0004639">
    <property type="term" value="F:phosphoribosylaminoimidazolesuccinocarboxamide synthase activity"/>
    <property type="evidence" value="ECO:0007669"/>
    <property type="project" value="UniProtKB-EC"/>
</dbReference>
<dbReference type="GO" id="GO:0006189">
    <property type="term" value="P:'de novo' IMP biosynthetic process"/>
    <property type="evidence" value="ECO:0007669"/>
    <property type="project" value="UniProtKB-UniPathway"/>
</dbReference>
<dbReference type="CDD" id="cd01414">
    <property type="entry name" value="SAICAR_synt_Sc"/>
    <property type="match status" value="1"/>
</dbReference>
<dbReference type="FunFam" id="3.30.200.20:FF:000392">
    <property type="entry name" value="Phosphoribosylaminoimidazole-succinocarboxamide synthase"/>
    <property type="match status" value="1"/>
</dbReference>
<dbReference type="FunFam" id="3.30.470.20:FF:000015">
    <property type="entry name" value="Phosphoribosylaminoimidazole-succinocarboxamide synthase"/>
    <property type="match status" value="1"/>
</dbReference>
<dbReference type="Gene3D" id="3.30.470.20">
    <property type="entry name" value="ATP-grasp fold, B domain"/>
    <property type="match status" value="1"/>
</dbReference>
<dbReference type="Gene3D" id="3.30.200.20">
    <property type="entry name" value="Phosphorylase Kinase, domain 1"/>
    <property type="match status" value="1"/>
</dbReference>
<dbReference type="HAMAP" id="MF_00137">
    <property type="entry name" value="SAICAR_synth"/>
    <property type="match status" value="1"/>
</dbReference>
<dbReference type="InterPro" id="IPR028923">
    <property type="entry name" value="SAICAR_synt/ADE2_N"/>
</dbReference>
<dbReference type="InterPro" id="IPR001636">
    <property type="entry name" value="SAICAR_synth"/>
</dbReference>
<dbReference type="InterPro" id="IPR018236">
    <property type="entry name" value="SAICAR_synthetase_CS"/>
</dbReference>
<dbReference type="NCBIfam" id="NF010568">
    <property type="entry name" value="PRK13961.1"/>
    <property type="match status" value="1"/>
</dbReference>
<dbReference type="NCBIfam" id="TIGR00081">
    <property type="entry name" value="purC"/>
    <property type="match status" value="1"/>
</dbReference>
<dbReference type="PANTHER" id="PTHR43700">
    <property type="entry name" value="PHOSPHORIBOSYLAMINOIMIDAZOLE-SUCCINOCARBOXAMIDE SYNTHASE"/>
    <property type="match status" value="1"/>
</dbReference>
<dbReference type="PANTHER" id="PTHR43700:SF1">
    <property type="entry name" value="PHOSPHORIBOSYLAMINOIMIDAZOLE-SUCCINOCARBOXAMIDE SYNTHASE"/>
    <property type="match status" value="1"/>
</dbReference>
<dbReference type="Pfam" id="PF01259">
    <property type="entry name" value="SAICAR_synt"/>
    <property type="match status" value="1"/>
</dbReference>
<dbReference type="SUPFAM" id="SSF56104">
    <property type="entry name" value="SAICAR synthase-like"/>
    <property type="match status" value="1"/>
</dbReference>
<dbReference type="PROSITE" id="PS01057">
    <property type="entry name" value="SAICAR_SYNTHETASE_1"/>
    <property type="match status" value="1"/>
</dbReference>
<dbReference type="PROSITE" id="PS01058">
    <property type="entry name" value="SAICAR_SYNTHETASE_2"/>
    <property type="match status" value="1"/>
</dbReference>
<sequence length="301" mass="33797">MSITQTNLDNILPLVARGKVRDIYEVDEKTLLFVATDRISAYDVIMENGIPQKGQLLTQLSEFWFEFLKPYIKTHLIEVDDIFAHLPKVLSEDRYKSQLQGGSLLVRKYKLVPLEVIVRGYITGSAWKVYKKSGTVHGVKAAEGLQESQEFPTPIFTPSTKAEQGEHDENISVEQAEAIVGKELADKIGKVAVELYSKAKGYAAGRGIIIADTKFEFGLDDDNELVLVDEVLTPDSSRFWNAKTYEVGKGQDSYDKQFLRDWLTSNGLAGKEGVSMTEDIATRSRVKYVEAYEALTGKKWE</sequence>
<proteinExistence type="inferred from homology"/>
<protein>
    <recommendedName>
        <fullName>Phosphoribosylaminoimidazole-succinocarboxamide synthase</fullName>
        <ecNumber>6.3.2.6</ecNumber>
    </recommendedName>
    <alternativeName>
        <fullName>SAICAR synthetase</fullName>
    </alternativeName>
</protein>
<keyword id="KW-0067">ATP-binding</keyword>
<keyword id="KW-0436">Ligase</keyword>
<keyword id="KW-0547">Nucleotide-binding</keyword>
<keyword id="KW-0658">Purine biosynthesis</keyword>
<comment type="catalytic activity">
    <reaction>
        <text>5-amino-1-(5-phospho-D-ribosyl)imidazole-4-carboxylate + L-aspartate + ATP = (2S)-2-[5-amino-1-(5-phospho-beta-D-ribosyl)imidazole-4-carboxamido]succinate + ADP + phosphate + 2 H(+)</text>
        <dbReference type="Rhea" id="RHEA:22628"/>
        <dbReference type="ChEBI" id="CHEBI:15378"/>
        <dbReference type="ChEBI" id="CHEBI:29991"/>
        <dbReference type="ChEBI" id="CHEBI:30616"/>
        <dbReference type="ChEBI" id="CHEBI:43474"/>
        <dbReference type="ChEBI" id="CHEBI:58443"/>
        <dbReference type="ChEBI" id="CHEBI:77657"/>
        <dbReference type="ChEBI" id="CHEBI:456216"/>
        <dbReference type="EC" id="6.3.2.6"/>
    </reaction>
</comment>
<comment type="pathway">
    <text>Purine metabolism; IMP biosynthesis via de novo pathway; 5-amino-1-(5-phospho-D-ribosyl)imidazole-4-carboxamide from 5-amino-1-(5-phospho-D-ribosyl)imidazole-4-carboxylate: step 1/2.</text>
</comment>
<comment type="similarity">
    <text evidence="1">Belongs to the SAICAR synthetase family.</text>
</comment>